<reference key="1">
    <citation type="journal article" date="2007" name="Environ. Microbiol.">
        <title>Whole-genome analysis of the ammonia-oxidizing bacterium, Nitrosomonas eutropha C91: implications for niche adaptation.</title>
        <authorList>
            <person name="Stein L.Y."/>
            <person name="Arp D.J."/>
            <person name="Berube P.M."/>
            <person name="Chain P.S."/>
            <person name="Hauser L."/>
            <person name="Jetten M.S."/>
            <person name="Klotz M.G."/>
            <person name="Larimer F.W."/>
            <person name="Norton J.M."/>
            <person name="Op den Camp H.J.M."/>
            <person name="Shin M."/>
            <person name="Wei X."/>
        </authorList>
    </citation>
    <scope>NUCLEOTIDE SEQUENCE [LARGE SCALE GENOMIC DNA]</scope>
    <source>
        <strain>DSM 101675 / C91 / Nm57</strain>
    </source>
</reference>
<proteinExistence type="inferred from homology"/>
<organism>
    <name type="scientific">Nitrosomonas eutropha (strain DSM 101675 / C91 / Nm57)</name>
    <dbReference type="NCBI Taxonomy" id="335283"/>
    <lineage>
        <taxon>Bacteria</taxon>
        <taxon>Pseudomonadati</taxon>
        <taxon>Pseudomonadota</taxon>
        <taxon>Betaproteobacteria</taxon>
        <taxon>Nitrosomonadales</taxon>
        <taxon>Nitrosomonadaceae</taxon>
        <taxon>Nitrosomonas</taxon>
    </lineage>
</organism>
<evidence type="ECO:0000255" key="1">
    <source>
        <dbReference type="HAMAP-Rule" id="MF_00037"/>
    </source>
</evidence>
<gene>
    <name evidence="1" type="primary">murB</name>
    <name type="ordered locus">Neut_0244</name>
</gene>
<protein>
    <recommendedName>
        <fullName evidence="1">UDP-N-acetylenolpyruvoylglucosamine reductase</fullName>
        <ecNumber evidence="1">1.3.1.98</ecNumber>
    </recommendedName>
    <alternativeName>
        <fullName evidence="1">UDP-N-acetylmuramate dehydrogenase</fullName>
    </alternativeName>
</protein>
<comment type="function">
    <text evidence="1">Cell wall formation.</text>
</comment>
<comment type="catalytic activity">
    <reaction evidence="1">
        <text>UDP-N-acetyl-alpha-D-muramate + NADP(+) = UDP-N-acetyl-3-O-(1-carboxyvinyl)-alpha-D-glucosamine + NADPH + H(+)</text>
        <dbReference type="Rhea" id="RHEA:12248"/>
        <dbReference type="ChEBI" id="CHEBI:15378"/>
        <dbReference type="ChEBI" id="CHEBI:57783"/>
        <dbReference type="ChEBI" id="CHEBI:58349"/>
        <dbReference type="ChEBI" id="CHEBI:68483"/>
        <dbReference type="ChEBI" id="CHEBI:70757"/>
        <dbReference type="EC" id="1.3.1.98"/>
    </reaction>
</comment>
<comment type="cofactor">
    <cofactor evidence="1">
        <name>FAD</name>
        <dbReference type="ChEBI" id="CHEBI:57692"/>
    </cofactor>
</comment>
<comment type="pathway">
    <text evidence="1">Cell wall biogenesis; peptidoglycan biosynthesis.</text>
</comment>
<comment type="subcellular location">
    <subcellularLocation>
        <location evidence="1">Cytoplasm</location>
    </subcellularLocation>
</comment>
<comment type="similarity">
    <text evidence="1">Belongs to the MurB family.</text>
</comment>
<feature type="chain" id="PRO_0000332481" description="UDP-N-acetylenolpyruvoylglucosamine reductase">
    <location>
        <begin position="1"/>
        <end position="332"/>
    </location>
</feature>
<feature type="domain" description="FAD-binding PCMH-type" evidence="1">
    <location>
        <begin position="45"/>
        <end position="243"/>
    </location>
</feature>
<feature type="active site" evidence="1">
    <location>
        <position position="194"/>
    </location>
</feature>
<feature type="active site" description="Proton donor" evidence="1">
    <location>
        <position position="250"/>
    </location>
</feature>
<feature type="active site" evidence="1">
    <location>
        <position position="320"/>
    </location>
</feature>
<accession>Q0AJE3</accession>
<dbReference type="EC" id="1.3.1.98" evidence="1"/>
<dbReference type="EMBL" id="CP000450">
    <property type="protein sequence ID" value="ABI58528.1"/>
    <property type="molecule type" value="Genomic_DNA"/>
</dbReference>
<dbReference type="RefSeq" id="WP_011633372.1">
    <property type="nucleotide sequence ID" value="NC_008344.1"/>
</dbReference>
<dbReference type="SMR" id="Q0AJE3"/>
<dbReference type="STRING" id="335283.Neut_0244"/>
<dbReference type="KEGG" id="net:Neut_0244"/>
<dbReference type="eggNOG" id="COG0812">
    <property type="taxonomic scope" value="Bacteria"/>
</dbReference>
<dbReference type="HOGENOM" id="CLU_035304_1_1_4"/>
<dbReference type="UniPathway" id="UPA00219"/>
<dbReference type="Proteomes" id="UP000001966">
    <property type="component" value="Chromosome"/>
</dbReference>
<dbReference type="GO" id="GO:0005829">
    <property type="term" value="C:cytosol"/>
    <property type="evidence" value="ECO:0007669"/>
    <property type="project" value="TreeGrafter"/>
</dbReference>
<dbReference type="GO" id="GO:0071949">
    <property type="term" value="F:FAD binding"/>
    <property type="evidence" value="ECO:0007669"/>
    <property type="project" value="InterPro"/>
</dbReference>
<dbReference type="GO" id="GO:0008762">
    <property type="term" value="F:UDP-N-acetylmuramate dehydrogenase activity"/>
    <property type="evidence" value="ECO:0007669"/>
    <property type="project" value="UniProtKB-UniRule"/>
</dbReference>
<dbReference type="GO" id="GO:0051301">
    <property type="term" value="P:cell division"/>
    <property type="evidence" value="ECO:0007669"/>
    <property type="project" value="UniProtKB-KW"/>
</dbReference>
<dbReference type="GO" id="GO:0071555">
    <property type="term" value="P:cell wall organization"/>
    <property type="evidence" value="ECO:0007669"/>
    <property type="project" value="UniProtKB-KW"/>
</dbReference>
<dbReference type="GO" id="GO:0009252">
    <property type="term" value="P:peptidoglycan biosynthetic process"/>
    <property type="evidence" value="ECO:0007669"/>
    <property type="project" value="UniProtKB-UniRule"/>
</dbReference>
<dbReference type="GO" id="GO:0008360">
    <property type="term" value="P:regulation of cell shape"/>
    <property type="evidence" value="ECO:0007669"/>
    <property type="project" value="UniProtKB-KW"/>
</dbReference>
<dbReference type="Gene3D" id="3.30.465.10">
    <property type="match status" value="1"/>
</dbReference>
<dbReference type="Gene3D" id="3.90.78.10">
    <property type="entry name" value="UDP-N-acetylenolpyruvoylglucosamine reductase, C-terminal domain"/>
    <property type="match status" value="1"/>
</dbReference>
<dbReference type="Gene3D" id="3.30.43.10">
    <property type="entry name" value="Uridine Diphospho-n-acetylenolpyruvylglucosamine Reductase, domain 2"/>
    <property type="match status" value="1"/>
</dbReference>
<dbReference type="HAMAP" id="MF_00037">
    <property type="entry name" value="MurB"/>
    <property type="match status" value="1"/>
</dbReference>
<dbReference type="InterPro" id="IPR016166">
    <property type="entry name" value="FAD-bd_PCMH"/>
</dbReference>
<dbReference type="InterPro" id="IPR036318">
    <property type="entry name" value="FAD-bd_PCMH-like_sf"/>
</dbReference>
<dbReference type="InterPro" id="IPR016167">
    <property type="entry name" value="FAD-bd_PCMH_sub1"/>
</dbReference>
<dbReference type="InterPro" id="IPR016169">
    <property type="entry name" value="FAD-bd_PCMH_sub2"/>
</dbReference>
<dbReference type="InterPro" id="IPR003170">
    <property type="entry name" value="MurB"/>
</dbReference>
<dbReference type="InterPro" id="IPR011601">
    <property type="entry name" value="MurB_C"/>
</dbReference>
<dbReference type="InterPro" id="IPR036635">
    <property type="entry name" value="MurB_C_sf"/>
</dbReference>
<dbReference type="InterPro" id="IPR006094">
    <property type="entry name" value="Oxid_FAD_bind_N"/>
</dbReference>
<dbReference type="NCBIfam" id="TIGR00179">
    <property type="entry name" value="murB"/>
    <property type="match status" value="1"/>
</dbReference>
<dbReference type="NCBIfam" id="NF010480">
    <property type="entry name" value="PRK13905.1"/>
    <property type="match status" value="1"/>
</dbReference>
<dbReference type="PANTHER" id="PTHR21071">
    <property type="entry name" value="UDP-N-ACETYLENOLPYRUVOYLGLUCOSAMINE REDUCTASE"/>
    <property type="match status" value="1"/>
</dbReference>
<dbReference type="PANTHER" id="PTHR21071:SF4">
    <property type="entry name" value="UDP-N-ACETYLENOLPYRUVOYLGLUCOSAMINE REDUCTASE"/>
    <property type="match status" value="1"/>
</dbReference>
<dbReference type="Pfam" id="PF01565">
    <property type="entry name" value="FAD_binding_4"/>
    <property type="match status" value="1"/>
</dbReference>
<dbReference type="Pfam" id="PF02873">
    <property type="entry name" value="MurB_C"/>
    <property type="match status" value="1"/>
</dbReference>
<dbReference type="SUPFAM" id="SSF56176">
    <property type="entry name" value="FAD-binding/transporter-associated domain-like"/>
    <property type="match status" value="1"/>
</dbReference>
<dbReference type="SUPFAM" id="SSF56194">
    <property type="entry name" value="Uridine diphospho-N-Acetylenolpyruvylglucosamine reductase, MurB, C-terminal domain"/>
    <property type="match status" value="1"/>
</dbReference>
<dbReference type="PROSITE" id="PS51387">
    <property type="entry name" value="FAD_PCMH"/>
    <property type="match status" value="1"/>
</dbReference>
<name>MURB_NITEC</name>
<keyword id="KW-0131">Cell cycle</keyword>
<keyword id="KW-0132">Cell division</keyword>
<keyword id="KW-0133">Cell shape</keyword>
<keyword id="KW-0961">Cell wall biogenesis/degradation</keyword>
<keyword id="KW-0963">Cytoplasm</keyword>
<keyword id="KW-0274">FAD</keyword>
<keyword id="KW-0285">Flavoprotein</keyword>
<keyword id="KW-0521">NADP</keyword>
<keyword id="KW-0560">Oxidoreductase</keyword>
<keyword id="KW-0573">Peptidoglycan synthesis</keyword>
<sequence>MQTKARLPVDINAPSLQSPALGIDTHLLRGELRQHEPMKQHVSWRAGGHAAYFYQPADLEDLAVFLHFWPKDEPVMMIGLGSNFLVRDGGLPGVMIALHAKLNDLLLVEQEEDGGLIYAGAGVPCAKLARFASLHNLAGAEFLAGIPGTVGGALAMNAGCYGSETWERVERVKTIDRDGTLHERTPEDYRIGYRQVELHEVVPPDTSCSWFVGGWFRLRPGQQESSRQAVKALLGTRIKTQPLGFPSAGSVFRNPPGDYAARLVEQCGLKGFRIGDAMISTLHANFIINCGHATATEIETVINTVQDIVYKKTEIRLVTEVRIIGQHKGNEL</sequence>